<sequence length="394" mass="44150">MAKKLFMFEKPLGMRDTLPFLYELKKQVRSVMAEEIERWGYEFIETPTLEYYETVGAASAIADHRLFKLLDQQGHTLVLRPDMTAPIARVAASRLYDDGNPLRLAYNANVFRAQQREGGRPAEFEQIGVELIGDGTVTADAEVISLMVALLKRTGLGRFSVAVGHIGYVNALFLEILGNEERASVLRRFLYEKNYVGYREHVKSWPLSSIDQKRLLDLLSLRGGTDVIEQAKTLVTSEKGRRAADELAVLMAVLRTYGVAEAVKLDMALVSHMSYYTGILFEVYAEQVGFPIGNGGRYDDLLAKFSRPAPATGFGLRVDRLIEAIGETDVRDDIECIVFSQERLAEAVELAEAKRAEGKRVVLQHIAGIRDIDAYSQRYRSIVYLLGRSGRDGQ</sequence>
<dbReference type="EMBL" id="BA000043">
    <property type="protein sequence ID" value="BAD77362.1"/>
    <property type="molecule type" value="Genomic_DNA"/>
</dbReference>
<dbReference type="RefSeq" id="WP_011232547.1">
    <property type="nucleotide sequence ID" value="NC_006510.1"/>
</dbReference>
<dbReference type="SMR" id="Q5KVC4"/>
<dbReference type="STRING" id="235909.GK3077"/>
<dbReference type="KEGG" id="gka:GK3077"/>
<dbReference type="eggNOG" id="COG3705">
    <property type="taxonomic scope" value="Bacteria"/>
</dbReference>
<dbReference type="HOGENOM" id="CLU_025113_0_0_9"/>
<dbReference type="UniPathway" id="UPA00031">
    <property type="reaction ID" value="UER00006"/>
</dbReference>
<dbReference type="Proteomes" id="UP000001172">
    <property type="component" value="Chromosome"/>
</dbReference>
<dbReference type="GO" id="GO:0005737">
    <property type="term" value="C:cytoplasm"/>
    <property type="evidence" value="ECO:0007669"/>
    <property type="project" value="UniProtKB-SubCell"/>
</dbReference>
<dbReference type="GO" id="GO:0140096">
    <property type="term" value="F:catalytic activity, acting on a protein"/>
    <property type="evidence" value="ECO:0007669"/>
    <property type="project" value="UniProtKB-ARBA"/>
</dbReference>
<dbReference type="GO" id="GO:0004821">
    <property type="term" value="F:histidine-tRNA ligase activity"/>
    <property type="evidence" value="ECO:0007669"/>
    <property type="project" value="InterPro"/>
</dbReference>
<dbReference type="GO" id="GO:0016740">
    <property type="term" value="F:transferase activity"/>
    <property type="evidence" value="ECO:0007669"/>
    <property type="project" value="UniProtKB-ARBA"/>
</dbReference>
<dbReference type="GO" id="GO:0006427">
    <property type="term" value="P:histidyl-tRNA aminoacylation"/>
    <property type="evidence" value="ECO:0007669"/>
    <property type="project" value="InterPro"/>
</dbReference>
<dbReference type="GO" id="GO:0000105">
    <property type="term" value="P:L-histidine biosynthetic process"/>
    <property type="evidence" value="ECO:0007669"/>
    <property type="project" value="UniProtKB-UniRule"/>
</dbReference>
<dbReference type="CDD" id="cd00773">
    <property type="entry name" value="HisRS-like_core"/>
    <property type="match status" value="1"/>
</dbReference>
<dbReference type="Gene3D" id="3.40.50.12590">
    <property type="match status" value="1"/>
</dbReference>
<dbReference type="Gene3D" id="3.30.930.10">
    <property type="entry name" value="Bira Bifunctional Protein, Domain 2"/>
    <property type="match status" value="1"/>
</dbReference>
<dbReference type="HAMAP" id="MF_00125">
    <property type="entry name" value="HisZ"/>
    <property type="match status" value="1"/>
</dbReference>
<dbReference type="InterPro" id="IPR006195">
    <property type="entry name" value="aa-tRNA-synth_II"/>
</dbReference>
<dbReference type="InterPro" id="IPR045864">
    <property type="entry name" value="aa-tRNA-synth_II/BPL/LPL"/>
</dbReference>
<dbReference type="InterPro" id="IPR041715">
    <property type="entry name" value="HisRS-like_core"/>
</dbReference>
<dbReference type="InterPro" id="IPR004516">
    <property type="entry name" value="HisRS/HisZ"/>
</dbReference>
<dbReference type="InterPro" id="IPR004517">
    <property type="entry name" value="HisZ"/>
</dbReference>
<dbReference type="InterPro" id="IPR053846">
    <property type="entry name" value="HisZ-C"/>
</dbReference>
<dbReference type="NCBIfam" id="TIGR00443">
    <property type="entry name" value="hisZ_biosyn_reg"/>
    <property type="match status" value="1"/>
</dbReference>
<dbReference type="NCBIfam" id="NF008941">
    <property type="entry name" value="PRK12292.2-4"/>
    <property type="match status" value="1"/>
</dbReference>
<dbReference type="PANTHER" id="PTHR43707:SF1">
    <property type="entry name" value="HISTIDINE--TRNA LIGASE, MITOCHONDRIAL-RELATED"/>
    <property type="match status" value="1"/>
</dbReference>
<dbReference type="PANTHER" id="PTHR43707">
    <property type="entry name" value="HISTIDYL-TRNA SYNTHETASE"/>
    <property type="match status" value="1"/>
</dbReference>
<dbReference type="Pfam" id="PF21996">
    <property type="entry name" value="HisZ-like"/>
    <property type="match status" value="1"/>
</dbReference>
<dbReference type="Pfam" id="PF13393">
    <property type="entry name" value="tRNA-synt_His"/>
    <property type="match status" value="1"/>
</dbReference>
<dbReference type="PIRSF" id="PIRSF001549">
    <property type="entry name" value="His-tRNA_synth"/>
    <property type="match status" value="1"/>
</dbReference>
<dbReference type="SUPFAM" id="SSF55681">
    <property type="entry name" value="Class II aaRS and biotin synthetases"/>
    <property type="match status" value="1"/>
</dbReference>
<dbReference type="PROSITE" id="PS50862">
    <property type="entry name" value="AA_TRNA_LIGASE_II"/>
    <property type="match status" value="1"/>
</dbReference>
<comment type="function">
    <text evidence="1">Required for the first step of histidine biosynthesis. May allow the feedback regulation of ATP phosphoribosyltransferase activity by histidine.</text>
</comment>
<comment type="pathway">
    <text evidence="1">Amino-acid biosynthesis; L-histidine biosynthesis; L-histidine from 5-phospho-alpha-D-ribose 1-diphosphate: step 1/9.</text>
</comment>
<comment type="subunit">
    <text evidence="1">Heteromultimer composed of HisG and HisZ subunits.</text>
</comment>
<comment type="subcellular location">
    <subcellularLocation>
        <location evidence="1">Cytoplasm</location>
    </subcellularLocation>
</comment>
<comment type="miscellaneous">
    <text>This function is generally fulfilled by the C-terminal part of HisG, which is missing in some bacteria such as this one.</text>
</comment>
<comment type="similarity">
    <text evidence="1">Belongs to the class-II aminoacyl-tRNA synthetase family. HisZ subfamily.</text>
</comment>
<gene>
    <name evidence="1" type="primary">hisZ</name>
    <name type="ordered locus">GK3077</name>
</gene>
<protein>
    <recommendedName>
        <fullName evidence="1">ATP phosphoribosyltransferase regulatory subunit</fullName>
    </recommendedName>
</protein>
<accession>Q5KVC4</accession>
<evidence type="ECO:0000255" key="1">
    <source>
        <dbReference type="HAMAP-Rule" id="MF_00125"/>
    </source>
</evidence>
<proteinExistence type="inferred from homology"/>
<name>HISZ_GEOKA</name>
<keyword id="KW-0028">Amino-acid biosynthesis</keyword>
<keyword id="KW-0963">Cytoplasm</keyword>
<keyword id="KW-0368">Histidine biosynthesis</keyword>
<keyword id="KW-1185">Reference proteome</keyword>
<feature type="chain" id="PRO_0000242835" description="ATP phosphoribosyltransferase regulatory subunit">
    <location>
        <begin position="1"/>
        <end position="394"/>
    </location>
</feature>
<organism>
    <name type="scientific">Geobacillus kaustophilus (strain HTA426)</name>
    <dbReference type="NCBI Taxonomy" id="235909"/>
    <lineage>
        <taxon>Bacteria</taxon>
        <taxon>Bacillati</taxon>
        <taxon>Bacillota</taxon>
        <taxon>Bacilli</taxon>
        <taxon>Bacillales</taxon>
        <taxon>Anoxybacillaceae</taxon>
        <taxon>Geobacillus</taxon>
        <taxon>Geobacillus thermoleovorans group</taxon>
    </lineage>
</organism>
<reference key="1">
    <citation type="journal article" date="2004" name="Nucleic Acids Res.">
        <title>Thermoadaptation trait revealed by the genome sequence of thermophilic Geobacillus kaustophilus.</title>
        <authorList>
            <person name="Takami H."/>
            <person name="Takaki Y."/>
            <person name="Chee G.-J."/>
            <person name="Nishi S."/>
            <person name="Shimamura S."/>
            <person name="Suzuki H."/>
            <person name="Matsui S."/>
            <person name="Uchiyama I."/>
        </authorList>
    </citation>
    <scope>NUCLEOTIDE SEQUENCE [LARGE SCALE GENOMIC DNA]</scope>
    <source>
        <strain>HTA426</strain>
    </source>
</reference>